<gene>
    <name evidence="1" type="primary">glk</name>
    <name type="ordered locus">plu1405</name>
</gene>
<organism>
    <name type="scientific">Photorhabdus laumondii subsp. laumondii (strain DSM 15139 / CIP 105565 / TT01)</name>
    <name type="common">Photorhabdus luminescens subsp. laumondii</name>
    <dbReference type="NCBI Taxonomy" id="243265"/>
    <lineage>
        <taxon>Bacteria</taxon>
        <taxon>Pseudomonadati</taxon>
        <taxon>Pseudomonadota</taxon>
        <taxon>Gammaproteobacteria</taxon>
        <taxon>Enterobacterales</taxon>
        <taxon>Morganellaceae</taxon>
        <taxon>Photorhabdus</taxon>
    </lineage>
</organism>
<feature type="chain" id="PRO_0000215132" description="Glucokinase">
    <location>
        <begin position="1"/>
        <end position="321"/>
    </location>
</feature>
<feature type="binding site" evidence="1">
    <location>
        <begin position="8"/>
        <end position="13"/>
    </location>
    <ligand>
        <name>ATP</name>
        <dbReference type="ChEBI" id="CHEBI:30616"/>
    </ligand>
</feature>
<comment type="catalytic activity">
    <reaction evidence="1">
        <text>D-glucose + ATP = D-glucose 6-phosphate + ADP + H(+)</text>
        <dbReference type="Rhea" id="RHEA:17825"/>
        <dbReference type="ChEBI" id="CHEBI:4167"/>
        <dbReference type="ChEBI" id="CHEBI:15378"/>
        <dbReference type="ChEBI" id="CHEBI:30616"/>
        <dbReference type="ChEBI" id="CHEBI:61548"/>
        <dbReference type="ChEBI" id="CHEBI:456216"/>
        <dbReference type="EC" id="2.7.1.2"/>
    </reaction>
</comment>
<comment type="subcellular location">
    <subcellularLocation>
        <location evidence="1">Cytoplasm</location>
    </subcellularLocation>
</comment>
<comment type="similarity">
    <text evidence="1">Belongs to the bacterial glucokinase family.</text>
</comment>
<proteinExistence type="inferred from homology"/>
<sequence length="321" mass="35233">MNLYGLVADIGGTNARLALCNLENGVIERIETYSAKQHAGLESIISHYLAEQKTVVTYACIAIACPINGDWVEMTNHQWAFSISELKRTLGLEKLDVINDFTAVSMAIPMLTEEYKLQLGGGEAVKDKPIAVYGAGTGLGVAHLIKVDKQWVSLPGEGGHVDFAANSEEQDAILAVLRRKFGHVSVERILSGSGLVNLYQAIAILDHRQPEDLEPETVTQRALDKSCQYCHRALTLFCEIMGRFGGNLALNMGTFGGVYIAGGIVPRFLDFFRQSNFLHGFEDKGRFKPLVQQIPVYLITHPQPGLLGSGTYLRQQLSLID</sequence>
<protein>
    <recommendedName>
        <fullName evidence="1">Glucokinase</fullName>
        <ecNumber evidence="1">2.7.1.2</ecNumber>
    </recommendedName>
    <alternativeName>
        <fullName evidence="1">Glucose kinase</fullName>
    </alternativeName>
</protein>
<keyword id="KW-0067">ATP-binding</keyword>
<keyword id="KW-0963">Cytoplasm</keyword>
<keyword id="KW-0324">Glycolysis</keyword>
<keyword id="KW-0418">Kinase</keyword>
<keyword id="KW-0547">Nucleotide-binding</keyword>
<keyword id="KW-1185">Reference proteome</keyword>
<keyword id="KW-0808">Transferase</keyword>
<dbReference type="EC" id="2.7.1.2" evidence="1"/>
<dbReference type="EMBL" id="BX571863">
    <property type="protein sequence ID" value="CAE13698.1"/>
    <property type="molecule type" value="Genomic_DNA"/>
</dbReference>
<dbReference type="RefSeq" id="WP_011145711.1">
    <property type="nucleotide sequence ID" value="NC_005126.1"/>
</dbReference>
<dbReference type="SMR" id="Q7N6Y0"/>
<dbReference type="STRING" id="243265.plu1405"/>
<dbReference type="GeneID" id="48847692"/>
<dbReference type="KEGG" id="plu:plu1405"/>
<dbReference type="eggNOG" id="COG0837">
    <property type="taxonomic scope" value="Bacteria"/>
</dbReference>
<dbReference type="HOGENOM" id="CLU_042582_1_0_6"/>
<dbReference type="OrthoDB" id="9800595at2"/>
<dbReference type="Proteomes" id="UP000002514">
    <property type="component" value="Chromosome"/>
</dbReference>
<dbReference type="GO" id="GO:0005829">
    <property type="term" value="C:cytosol"/>
    <property type="evidence" value="ECO:0007669"/>
    <property type="project" value="TreeGrafter"/>
</dbReference>
<dbReference type="GO" id="GO:0005524">
    <property type="term" value="F:ATP binding"/>
    <property type="evidence" value="ECO:0007669"/>
    <property type="project" value="UniProtKB-UniRule"/>
</dbReference>
<dbReference type="GO" id="GO:0005536">
    <property type="term" value="F:D-glucose binding"/>
    <property type="evidence" value="ECO:0007669"/>
    <property type="project" value="InterPro"/>
</dbReference>
<dbReference type="GO" id="GO:0004340">
    <property type="term" value="F:glucokinase activity"/>
    <property type="evidence" value="ECO:0007669"/>
    <property type="project" value="UniProtKB-UniRule"/>
</dbReference>
<dbReference type="GO" id="GO:0006096">
    <property type="term" value="P:glycolytic process"/>
    <property type="evidence" value="ECO:0007669"/>
    <property type="project" value="UniProtKB-UniRule"/>
</dbReference>
<dbReference type="CDD" id="cd24008">
    <property type="entry name" value="ASKHA_NBD_GLK"/>
    <property type="match status" value="1"/>
</dbReference>
<dbReference type="FunFam" id="3.40.367.20:FF:000002">
    <property type="entry name" value="Glucokinase"/>
    <property type="match status" value="1"/>
</dbReference>
<dbReference type="Gene3D" id="3.30.420.40">
    <property type="match status" value="1"/>
</dbReference>
<dbReference type="Gene3D" id="3.40.367.20">
    <property type="match status" value="1"/>
</dbReference>
<dbReference type="HAMAP" id="MF_00524">
    <property type="entry name" value="Glucokinase"/>
    <property type="match status" value="1"/>
</dbReference>
<dbReference type="InterPro" id="IPR043129">
    <property type="entry name" value="ATPase_NBD"/>
</dbReference>
<dbReference type="InterPro" id="IPR050201">
    <property type="entry name" value="Bacterial_glucokinase"/>
</dbReference>
<dbReference type="InterPro" id="IPR003836">
    <property type="entry name" value="Glucokinase"/>
</dbReference>
<dbReference type="NCBIfam" id="TIGR00749">
    <property type="entry name" value="glk"/>
    <property type="match status" value="1"/>
</dbReference>
<dbReference type="NCBIfam" id="NF001414">
    <property type="entry name" value="PRK00292.1-1"/>
    <property type="match status" value="1"/>
</dbReference>
<dbReference type="NCBIfam" id="NF001416">
    <property type="entry name" value="PRK00292.1-3"/>
    <property type="match status" value="1"/>
</dbReference>
<dbReference type="NCBIfam" id="NF009073">
    <property type="entry name" value="PRK12408.1"/>
    <property type="match status" value="1"/>
</dbReference>
<dbReference type="PANTHER" id="PTHR47690">
    <property type="entry name" value="GLUCOKINASE"/>
    <property type="match status" value="1"/>
</dbReference>
<dbReference type="PANTHER" id="PTHR47690:SF1">
    <property type="entry name" value="GLUCOKINASE"/>
    <property type="match status" value="1"/>
</dbReference>
<dbReference type="Pfam" id="PF02685">
    <property type="entry name" value="Glucokinase"/>
    <property type="match status" value="1"/>
</dbReference>
<dbReference type="SUPFAM" id="SSF53067">
    <property type="entry name" value="Actin-like ATPase domain"/>
    <property type="match status" value="1"/>
</dbReference>
<evidence type="ECO:0000255" key="1">
    <source>
        <dbReference type="HAMAP-Rule" id="MF_00524"/>
    </source>
</evidence>
<reference key="1">
    <citation type="journal article" date="2003" name="Nat. Biotechnol.">
        <title>The genome sequence of the entomopathogenic bacterium Photorhabdus luminescens.</title>
        <authorList>
            <person name="Duchaud E."/>
            <person name="Rusniok C."/>
            <person name="Frangeul L."/>
            <person name="Buchrieser C."/>
            <person name="Givaudan A."/>
            <person name="Taourit S."/>
            <person name="Bocs S."/>
            <person name="Boursaux-Eude C."/>
            <person name="Chandler M."/>
            <person name="Charles J.-F."/>
            <person name="Dassa E."/>
            <person name="Derose R."/>
            <person name="Derzelle S."/>
            <person name="Freyssinet G."/>
            <person name="Gaudriault S."/>
            <person name="Medigue C."/>
            <person name="Lanois A."/>
            <person name="Powell K."/>
            <person name="Siguier P."/>
            <person name="Vincent R."/>
            <person name="Wingate V."/>
            <person name="Zouine M."/>
            <person name="Glaser P."/>
            <person name="Boemare N."/>
            <person name="Danchin A."/>
            <person name="Kunst F."/>
        </authorList>
    </citation>
    <scope>NUCLEOTIDE SEQUENCE [LARGE SCALE GENOMIC DNA]</scope>
    <source>
        <strain>DSM 15139 / CIP 105565 / TT01</strain>
    </source>
</reference>
<accession>Q7N6Y0</accession>
<name>GLK_PHOLL</name>